<protein>
    <recommendedName>
        <fullName evidence="1">Histidinol dehydrogenase</fullName>
        <shortName evidence="1">HDH</shortName>
        <ecNumber evidence="1">1.1.1.23</ecNumber>
    </recommendedName>
</protein>
<comment type="function">
    <text evidence="1">Catalyzes the sequential NAD-dependent oxidations of L-histidinol to L-histidinaldehyde and then to L-histidine.</text>
</comment>
<comment type="catalytic activity">
    <reaction evidence="1">
        <text>L-histidinol + 2 NAD(+) + H2O = L-histidine + 2 NADH + 3 H(+)</text>
        <dbReference type="Rhea" id="RHEA:20641"/>
        <dbReference type="ChEBI" id="CHEBI:15377"/>
        <dbReference type="ChEBI" id="CHEBI:15378"/>
        <dbReference type="ChEBI" id="CHEBI:57540"/>
        <dbReference type="ChEBI" id="CHEBI:57595"/>
        <dbReference type="ChEBI" id="CHEBI:57699"/>
        <dbReference type="ChEBI" id="CHEBI:57945"/>
        <dbReference type="EC" id="1.1.1.23"/>
    </reaction>
</comment>
<comment type="cofactor">
    <cofactor evidence="1">
        <name>Zn(2+)</name>
        <dbReference type="ChEBI" id="CHEBI:29105"/>
    </cofactor>
    <text evidence="1">Binds 1 zinc ion per subunit.</text>
</comment>
<comment type="pathway">
    <text evidence="1">Amino-acid biosynthesis; L-histidine biosynthesis; L-histidine from 5-phospho-alpha-D-ribose 1-diphosphate: step 9/9.</text>
</comment>
<comment type="similarity">
    <text evidence="1">Belongs to the histidinol dehydrogenase family.</text>
</comment>
<organism>
    <name type="scientific">Chlorobium luteolum (strain DSM 273 / BCRC 81028 / 2530)</name>
    <name type="common">Pelodictyon luteolum</name>
    <dbReference type="NCBI Taxonomy" id="319225"/>
    <lineage>
        <taxon>Bacteria</taxon>
        <taxon>Pseudomonadati</taxon>
        <taxon>Chlorobiota</taxon>
        <taxon>Chlorobiia</taxon>
        <taxon>Chlorobiales</taxon>
        <taxon>Chlorobiaceae</taxon>
        <taxon>Chlorobium/Pelodictyon group</taxon>
        <taxon>Pelodictyon</taxon>
    </lineage>
</organism>
<sequence length="443" mass="48062">MSPVHYRTSTSTIVAVLKLYRFLDDRDALFRQIGRSVDFDPEVQRAVTDILEAVRLRGDMAVLEYTERFQGAVLTSMQVPEEDILRAREEADPAFIRVLEEAWENILRFHRHEVENSFFYEGEGGVVLGQRVTPMDRAMLYVPGGKASYPSSVLMNAAPARVAGVGEIFMTTPCDASGAVSPHILAAASVAGVTSVYRLGGAQAVAAFAYGTQTIPKVDIITGPGNKYVALAKKQVFGHVAIDSIAGPSEVVVVADDDADAEFITMDLFAQAEHDPDASSVLITPSMRLAEEVRDLAAARVGSMLRGEVIAEALSNNGAIVVVADIEEACRVSDMIAPEHLELHVLHPWELLASIRHAGAVFMGGYSCETVGDYYAGPNHTLPTNGTARFFSPLSVRDFVKHTSIISYTRRQIMACGERIASFADHEGLEAHAEAVRARLKKG</sequence>
<keyword id="KW-0028">Amino-acid biosynthesis</keyword>
<keyword id="KW-0368">Histidine biosynthesis</keyword>
<keyword id="KW-0479">Metal-binding</keyword>
<keyword id="KW-0520">NAD</keyword>
<keyword id="KW-0560">Oxidoreductase</keyword>
<keyword id="KW-1185">Reference proteome</keyword>
<keyword id="KW-0862">Zinc</keyword>
<reference key="1">
    <citation type="submission" date="2005-08" db="EMBL/GenBank/DDBJ databases">
        <title>Complete sequence of Pelodictyon luteolum DSM 273.</title>
        <authorList>
            <consortium name="US DOE Joint Genome Institute"/>
            <person name="Copeland A."/>
            <person name="Lucas S."/>
            <person name="Lapidus A."/>
            <person name="Barry K."/>
            <person name="Detter J.C."/>
            <person name="Glavina T."/>
            <person name="Hammon N."/>
            <person name="Israni S."/>
            <person name="Pitluck S."/>
            <person name="Bryant D."/>
            <person name="Schmutz J."/>
            <person name="Larimer F."/>
            <person name="Land M."/>
            <person name="Kyrpides N."/>
            <person name="Ivanova N."/>
            <person name="Richardson P."/>
        </authorList>
    </citation>
    <scope>NUCLEOTIDE SEQUENCE [LARGE SCALE GENOMIC DNA]</scope>
    <source>
        <strain>DSM 273 / BCRC 81028 / 2530</strain>
    </source>
</reference>
<dbReference type="EC" id="1.1.1.23" evidence="1"/>
<dbReference type="EMBL" id="CP000096">
    <property type="protein sequence ID" value="ABB23438.1"/>
    <property type="molecule type" value="Genomic_DNA"/>
</dbReference>
<dbReference type="SMR" id="Q3B5E3"/>
<dbReference type="STRING" id="319225.Plut_0554"/>
<dbReference type="KEGG" id="plt:Plut_0554"/>
<dbReference type="eggNOG" id="COG0141">
    <property type="taxonomic scope" value="Bacteria"/>
</dbReference>
<dbReference type="HOGENOM" id="CLU_006732_3_0_10"/>
<dbReference type="OrthoDB" id="9805269at2"/>
<dbReference type="UniPathway" id="UPA00031">
    <property type="reaction ID" value="UER00014"/>
</dbReference>
<dbReference type="Proteomes" id="UP000002709">
    <property type="component" value="Chromosome"/>
</dbReference>
<dbReference type="GO" id="GO:0005829">
    <property type="term" value="C:cytosol"/>
    <property type="evidence" value="ECO:0007669"/>
    <property type="project" value="TreeGrafter"/>
</dbReference>
<dbReference type="GO" id="GO:0004399">
    <property type="term" value="F:histidinol dehydrogenase activity"/>
    <property type="evidence" value="ECO:0007669"/>
    <property type="project" value="UniProtKB-UniRule"/>
</dbReference>
<dbReference type="GO" id="GO:0051287">
    <property type="term" value="F:NAD binding"/>
    <property type="evidence" value="ECO:0007669"/>
    <property type="project" value="InterPro"/>
</dbReference>
<dbReference type="GO" id="GO:0008270">
    <property type="term" value="F:zinc ion binding"/>
    <property type="evidence" value="ECO:0007669"/>
    <property type="project" value="UniProtKB-UniRule"/>
</dbReference>
<dbReference type="GO" id="GO:0000105">
    <property type="term" value="P:L-histidine biosynthetic process"/>
    <property type="evidence" value="ECO:0007669"/>
    <property type="project" value="UniProtKB-UniRule"/>
</dbReference>
<dbReference type="CDD" id="cd06572">
    <property type="entry name" value="Histidinol_dh"/>
    <property type="match status" value="1"/>
</dbReference>
<dbReference type="FunFam" id="3.40.50.1980:FF:000001">
    <property type="entry name" value="Histidinol dehydrogenase"/>
    <property type="match status" value="1"/>
</dbReference>
<dbReference type="FunFam" id="3.40.50.1980:FF:000026">
    <property type="entry name" value="Histidinol dehydrogenase"/>
    <property type="match status" value="1"/>
</dbReference>
<dbReference type="Gene3D" id="1.20.5.1300">
    <property type="match status" value="1"/>
</dbReference>
<dbReference type="Gene3D" id="3.40.50.1980">
    <property type="entry name" value="Nitrogenase molybdenum iron protein domain"/>
    <property type="match status" value="2"/>
</dbReference>
<dbReference type="HAMAP" id="MF_01024">
    <property type="entry name" value="HisD"/>
    <property type="match status" value="1"/>
</dbReference>
<dbReference type="InterPro" id="IPR016161">
    <property type="entry name" value="Ald_DH/histidinol_DH"/>
</dbReference>
<dbReference type="InterPro" id="IPR001692">
    <property type="entry name" value="Histidinol_DH_CS"/>
</dbReference>
<dbReference type="InterPro" id="IPR022695">
    <property type="entry name" value="Histidinol_DH_monofunct"/>
</dbReference>
<dbReference type="InterPro" id="IPR012131">
    <property type="entry name" value="Hstdl_DH"/>
</dbReference>
<dbReference type="NCBIfam" id="TIGR00069">
    <property type="entry name" value="hisD"/>
    <property type="match status" value="1"/>
</dbReference>
<dbReference type="PANTHER" id="PTHR21256:SF2">
    <property type="entry name" value="HISTIDINE BIOSYNTHESIS TRIFUNCTIONAL PROTEIN"/>
    <property type="match status" value="1"/>
</dbReference>
<dbReference type="PANTHER" id="PTHR21256">
    <property type="entry name" value="HISTIDINOL DEHYDROGENASE HDH"/>
    <property type="match status" value="1"/>
</dbReference>
<dbReference type="Pfam" id="PF00815">
    <property type="entry name" value="Histidinol_dh"/>
    <property type="match status" value="1"/>
</dbReference>
<dbReference type="PIRSF" id="PIRSF000099">
    <property type="entry name" value="Histidinol_dh"/>
    <property type="match status" value="1"/>
</dbReference>
<dbReference type="PRINTS" id="PR00083">
    <property type="entry name" value="HOLDHDRGNASE"/>
</dbReference>
<dbReference type="SUPFAM" id="SSF53720">
    <property type="entry name" value="ALDH-like"/>
    <property type="match status" value="1"/>
</dbReference>
<dbReference type="PROSITE" id="PS00611">
    <property type="entry name" value="HISOL_DEHYDROGENASE"/>
    <property type="match status" value="1"/>
</dbReference>
<gene>
    <name evidence="1" type="primary">hisD</name>
    <name type="ordered locus">Plut_0554</name>
</gene>
<name>HISX_CHLL3</name>
<proteinExistence type="inferred from homology"/>
<feature type="chain" id="PRO_0000229860" description="Histidinol dehydrogenase">
    <location>
        <begin position="1"/>
        <end position="443"/>
    </location>
</feature>
<feature type="active site" description="Proton acceptor" evidence="1">
    <location>
        <position position="339"/>
    </location>
</feature>
<feature type="active site" description="Proton acceptor" evidence="1">
    <location>
        <position position="340"/>
    </location>
</feature>
<feature type="binding site" evidence="1">
    <location>
        <position position="141"/>
    </location>
    <ligand>
        <name>NAD(+)</name>
        <dbReference type="ChEBI" id="CHEBI:57540"/>
    </ligand>
</feature>
<feature type="binding site" evidence="1">
    <location>
        <position position="203"/>
    </location>
    <ligand>
        <name>NAD(+)</name>
        <dbReference type="ChEBI" id="CHEBI:57540"/>
    </ligand>
</feature>
<feature type="binding site" evidence="1">
    <location>
        <position position="226"/>
    </location>
    <ligand>
        <name>NAD(+)</name>
        <dbReference type="ChEBI" id="CHEBI:57540"/>
    </ligand>
</feature>
<feature type="binding site" evidence="1">
    <location>
        <position position="249"/>
    </location>
    <ligand>
        <name>substrate</name>
    </ligand>
</feature>
<feature type="binding site" evidence="1">
    <location>
        <position position="271"/>
    </location>
    <ligand>
        <name>substrate</name>
    </ligand>
</feature>
<feature type="binding site" evidence="1">
    <location>
        <position position="271"/>
    </location>
    <ligand>
        <name>Zn(2+)</name>
        <dbReference type="ChEBI" id="CHEBI:29105"/>
    </ligand>
</feature>
<feature type="binding site" evidence="1">
    <location>
        <position position="274"/>
    </location>
    <ligand>
        <name>substrate</name>
    </ligand>
</feature>
<feature type="binding site" evidence="1">
    <location>
        <position position="274"/>
    </location>
    <ligand>
        <name>Zn(2+)</name>
        <dbReference type="ChEBI" id="CHEBI:29105"/>
    </ligand>
</feature>
<feature type="binding site" evidence="1">
    <location>
        <position position="340"/>
    </location>
    <ligand>
        <name>substrate</name>
    </ligand>
</feature>
<feature type="binding site" evidence="1">
    <location>
        <position position="373"/>
    </location>
    <ligand>
        <name>substrate</name>
    </ligand>
</feature>
<feature type="binding site" evidence="1">
    <location>
        <position position="373"/>
    </location>
    <ligand>
        <name>Zn(2+)</name>
        <dbReference type="ChEBI" id="CHEBI:29105"/>
    </ligand>
</feature>
<feature type="binding site" evidence="1">
    <location>
        <position position="427"/>
    </location>
    <ligand>
        <name>substrate</name>
    </ligand>
</feature>
<feature type="binding site" evidence="1">
    <location>
        <position position="432"/>
    </location>
    <ligand>
        <name>substrate</name>
    </ligand>
</feature>
<feature type="binding site" evidence="1">
    <location>
        <position position="432"/>
    </location>
    <ligand>
        <name>Zn(2+)</name>
        <dbReference type="ChEBI" id="CHEBI:29105"/>
    </ligand>
</feature>
<evidence type="ECO:0000255" key="1">
    <source>
        <dbReference type="HAMAP-Rule" id="MF_01024"/>
    </source>
</evidence>
<accession>Q3B5E3</accession>